<accession>P96313</accession>
<feature type="chain" id="PRO_0000109575" description="Protein translocase subunit SecA">
    <location>
        <begin position="1" status="less than"/>
        <end position="473"/>
    </location>
</feature>
<feature type="region of interest" description="Disordered" evidence="2">
    <location>
        <begin position="424"/>
        <end position="447"/>
    </location>
</feature>
<feature type="binding site" evidence="1">
    <location>
        <position position="127"/>
    </location>
    <ligand>
        <name>ATP</name>
        <dbReference type="ChEBI" id="CHEBI:30616"/>
    </ligand>
</feature>
<feature type="binding site" evidence="1">
    <location>
        <position position="457"/>
    </location>
    <ligand>
        <name>Zn(2+)</name>
        <dbReference type="ChEBI" id="CHEBI:29105"/>
    </ligand>
</feature>
<feature type="binding site" evidence="1">
    <location>
        <position position="459"/>
    </location>
    <ligand>
        <name>Zn(2+)</name>
        <dbReference type="ChEBI" id="CHEBI:29105"/>
    </ligand>
</feature>
<feature type="binding site" evidence="1">
    <location>
        <position position="468"/>
    </location>
    <ligand>
        <name>Zn(2+)</name>
        <dbReference type="ChEBI" id="CHEBI:29105"/>
    </ligand>
</feature>
<feature type="binding site" evidence="1">
    <location>
        <position position="469"/>
    </location>
    <ligand>
        <name>Zn(2+)</name>
        <dbReference type="ChEBI" id="CHEBI:29105"/>
    </ligand>
</feature>
<feature type="non-terminal residue">
    <location>
        <position position="1"/>
    </location>
</feature>
<organism>
    <name type="scientific">Cytobacillus firmus</name>
    <name type="common">Bacillus firmus</name>
    <dbReference type="NCBI Taxonomy" id="1399"/>
    <lineage>
        <taxon>Bacteria</taxon>
        <taxon>Bacillati</taxon>
        <taxon>Bacillota</taxon>
        <taxon>Bacilli</taxon>
        <taxon>Bacillales</taxon>
        <taxon>Bacillaceae</taxon>
        <taxon>Cytobacillus</taxon>
    </lineage>
</organism>
<name>SECA_CYTFI</name>
<proteinExistence type="inferred from homology"/>
<reference key="1">
    <citation type="submission" date="1996-07" db="EMBL/GenBank/DDBJ databases">
        <authorList>
            <person name="Bauer M."/>
            <person name="Baeuerlein E."/>
        </authorList>
    </citation>
    <scope>NUCLEOTIDE SEQUENCE [GENOMIC DNA]</scope>
</reference>
<evidence type="ECO:0000250" key="1"/>
<evidence type="ECO:0000256" key="2">
    <source>
        <dbReference type="SAM" id="MobiDB-lite"/>
    </source>
</evidence>
<evidence type="ECO:0000305" key="3"/>
<dbReference type="EC" id="7.4.2.8" evidence="1"/>
<dbReference type="EMBL" id="X99401">
    <property type="protein sequence ID" value="CAA67777.1"/>
    <property type="molecule type" value="Genomic_DNA"/>
</dbReference>
<dbReference type="SMR" id="P96313"/>
<dbReference type="GO" id="GO:0031522">
    <property type="term" value="C:cell envelope Sec protein transport complex"/>
    <property type="evidence" value="ECO:0007669"/>
    <property type="project" value="TreeGrafter"/>
</dbReference>
<dbReference type="GO" id="GO:0005829">
    <property type="term" value="C:cytosol"/>
    <property type="evidence" value="ECO:0007669"/>
    <property type="project" value="TreeGrafter"/>
</dbReference>
<dbReference type="GO" id="GO:0005886">
    <property type="term" value="C:plasma membrane"/>
    <property type="evidence" value="ECO:0007669"/>
    <property type="project" value="UniProtKB-SubCell"/>
</dbReference>
<dbReference type="GO" id="GO:0005524">
    <property type="term" value="F:ATP binding"/>
    <property type="evidence" value="ECO:0007669"/>
    <property type="project" value="UniProtKB-KW"/>
</dbReference>
<dbReference type="GO" id="GO:0046872">
    <property type="term" value="F:metal ion binding"/>
    <property type="evidence" value="ECO:0007669"/>
    <property type="project" value="UniProtKB-KW"/>
</dbReference>
<dbReference type="GO" id="GO:0008564">
    <property type="term" value="F:protein-exporting ATPase activity"/>
    <property type="evidence" value="ECO:0007669"/>
    <property type="project" value="UniProtKB-EC"/>
</dbReference>
<dbReference type="GO" id="GO:0006886">
    <property type="term" value="P:intracellular protein transport"/>
    <property type="evidence" value="ECO:0007669"/>
    <property type="project" value="InterPro"/>
</dbReference>
<dbReference type="GO" id="GO:0017038">
    <property type="term" value="P:protein import"/>
    <property type="evidence" value="ECO:0007669"/>
    <property type="project" value="InterPro"/>
</dbReference>
<dbReference type="GO" id="GO:0006605">
    <property type="term" value="P:protein targeting"/>
    <property type="evidence" value="ECO:0007669"/>
    <property type="project" value="InterPro"/>
</dbReference>
<dbReference type="GO" id="GO:0043952">
    <property type="term" value="P:protein transport by the Sec complex"/>
    <property type="evidence" value="ECO:0007669"/>
    <property type="project" value="TreeGrafter"/>
</dbReference>
<dbReference type="CDD" id="cd18803">
    <property type="entry name" value="SF2_C_secA"/>
    <property type="match status" value="1"/>
</dbReference>
<dbReference type="FunFam" id="1.10.3060.10:FF:000002">
    <property type="entry name" value="Preprotein translocase subunit SecA"/>
    <property type="match status" value="1"/>
</dbReference>
<dbReference type="FunFam" id="3.40.50.300:FF:000694">
    <property type="entry name" value="Preprotein translocase subunit SecA"/>
    <property type="match status" value="1"/>
</dbReference>
<dbReference type="Gene3D" id="1.10.3060.10">
    <property type="entry name" value="Helical scaffold and wing domains of SecA"/>
    <property type="match status" value="1"/>
</dbReference>
<dbReference type="Gene3D" id="3.40.50.300">
    <property type="entry name" value="P-loop containing nucleotide triphosphate hydrolases"/>
    <property type="match status" value="3"/>
</dbReference>
<dbReference type="InterPro" id="IPR001650">
    <property type="entry name" value="Helicase_C-like"/>
</dbReference>
<dbReference type="InterPro" id="IPR027417">
    <property type="entry name" value="P-loop_NTPase"/>
</dbReference>
<dbReference type="InterPro" id="IPR004027">
    <property type="entry name" value="SEC_C_motif"/>
</dbReference>
<dbReference type="InterPro" id="IPR000185">
    <property type="entry name" value="SecA"/>
</dbReference>
<dbReference type="InterPro" id="IPR020937">
    <property type="entry name" value="SecA_CS"/>
</dbReference>
<dbReference type="InterPro" id="IPR014018">
    <property type="entry name" value="SecA_motor_DEAD"/>
</dbReference>
<dbReference type="InterPro" id="IPR044722">
    <property type="entry name" value="SecA_SF2_C"/>
</dbReference>
<dbReference type="InterPro" id="IPR011116">
    <property type="entry name" value="SecA_Wing/Scaffold"/>
</dbReference>
<dbReference type="InterPro" id="IPR036266">
    <property type="entry name" value="SecA_Wing/Scaffold_sf"/>
</dbReference>
<dbReference type="PANTHER" id="PTHR30612:SF0">
    <property type="entry name" value="CHLOROPLAST PROTEIN-TRANSPORTING ATPASE"/>
    <property type="match status" value="1"/>
</dbReference>
<dbReference type="PANTHER" id="PTHR30612">
    <property type="entry name" value="SECA INNER MEMBRANE COMPONENT OF SEC PROTEIN SECRETION SYSTEM"/>
    <property type="match status" value="1"/>
</dbReference>
<dbReference type="Pfam" id="PF21090">
    <property type="entry name" value="P-loop_SecA"/>
    <property type="match status" value="2"/>
</dbReference>
<dbReference type="Pfam" id="PF02810">
    <property type="entry name" value="SEC-C"/>
    <property type="match status" value="1"/>
</dbReference>
<dbReference type="Pfam" id="PF07516">
    <property type="entry name" value="SecA_SW"/>
    <property type="match status" value="1"/>
</dbReference>
<dbReference type="SUPFAM" id="SSF81886">
    <property type="entry name" value="Helical scaffold and wing domains of SecA"/>
    <property type="match status" value="1"/>
</dbReference>
<dbReference type="SUPFAM" id="SSF52540">
    <property type="entry name" value="P-loop containing nucleoside triphosphate hydrolases"/>
    <property type="match status" value="1"/>
</dbReference>
<dbReference type="PROSITE" id="PS01312">
    <property type="entry name" value="SECA"/>
    <property type="match status" value="1"/>
</dbReference>
<dbReference type="PROSITE" id="PS51196">
    <property type="entry name" value="SECA_MOTOR_DEAD"/>
    <property type="match status" value="1"/>
</dbReference>
<sequence>KLAGMTGTAKTEEEEFRNIYGMDVMVIPTNKPIARIDKPDLIYKTMEAKFRAVVNEIEEIHKKGQPVLVGTVSVETSELVSKLLNKRRVPHHVLNAKNHEREAEIIEGAGQQGAVTIATNMAGRGTDIKLGEGVRELGGLHVLGTERHESRRIDNQLRGRAGRQGDPGSSQFYLSMEDELMRRFGSDNMRSMMERLGMEEDQPIESRLVSRAVETAQKRVEGNNFDARKQILQYDDVMREQREIIYKQRMEVLESDNLRKIVETMIKDVIDRTVRLHTPENEVPEDWDLMAIVNYMNANLLQEGELEEKDIKGLDPEEMVEAITEKVIARYNEKEEQFTPEHMREFEKVIMLRTVDRKWMNHIDQMDQLRQGIHLRAYGQNDPLREYRFEGFEMFEAMIASIEEEVSMYIMKAQVQQNLERQKVAEGKAVHQDTSKQEPKKKQPIRKGETIGRNDACICGSGKKYKNCCGAGK</sequence>
<keyword id="KW-0067">ATP-binding</keyword>
<keyword id="KW-1003">Cell membrane</keyword>
<keyword id="KW-0963">Cytoplasm</keyword>
<keyword id="KW-0472">Membrane</keyword>
<keyword id="KW-0479">Metal-binding</keyword>
<keyword id="KW-0547">Nucleotide-binding</keyword>
<keyword id="KW-0653">Protein transport</keyword>
<keyword id="KW-1278">Translocase</keyword>
<keyword id="KW-0811">Translocation</keyword>
<keyword id="KW-0813">Transport</keyword>
<keyword id="KW-0862">Zinc</keyword>
<gene>
    <name evidence="1" type="primary">secA</name>
</gene>
<comment type="function">
    <text evidence="1">Part of the Sec protein translocase complex. Interacts with the SecYEG preprotein conducting channel. Has a central role in coupling the hydrolysis of ATP to the transfer of proteins into and across the cell membrane, serving as an ATP-driven molecular motor driving the stepwise translocation of polypeptide chains across the membrane.</text>
</comment>
<comment type="catalytic activity">
    <reaction evidence="1">
        <text>ATP + H2O + cellular proteinSide 1 = ADP + phosphate + cellular proteinSide 2.</text>
        <dbReference type="EC" id="7.4.2.8"/>
    </reaction>
</comment>
<comment type="cofactor">
    <cofactor evidence="1">
        <name>Zn(2+)</name>
        <dbReference type="ChEBI" id="CHEBI:29105"/>
    </cofactor>
    <text evidence="1">May bind 1 zinc ion per subunit.</text>
</comment>
<comment type="subunit">
    <text evidence="1">Monomer and homodimer (By similarity). Part of the essential Sec protein translocation apparatus which comprises SecA, SecYEG and auxiliary proteins SecDF. Other proteins may also be involved (By similarity).</text>
</comment>
<comment type="subcellular location">
    <subcellularLocation>
        <location evidence="1">Cell membrane</location>
        <topology evidence="1">Peripheral membrane protein</topology>
        <orientation evidence="1">Cytoplasmic side</orientation>
    </subcellularLocation>
    <subcellularLocation>
        <location evidence="1">Cytoplasm</location>
    </subcellularLocation>
    <text evidence="1">Distribution is 50-50.</text>
</comment>
<comment type="similarity">
    <text evidence="3">Belongs to the SecA family.</text>
</comment>
<protein>
    <recommendedName>
        <fullName evidence="1">Protein translocase subunit SecA</fullName>
        <ecNumber evidence="1">7.4.2.8</ecNumber>
    </recommendedName>
</protein>